<organism>
    <name type="scientific">Mycobacterium simiae</name>
    <name type="common">Mycobacterium habana</name>
    <dbReference type="NCBI Taxonomy" id="1784"/>
    <lineage>
        <taxon>Bacteria</taxon>
        <taxon>Bacillati</taxon>
        <taxon>Actinomycetota</taxon>
        <taxon>Actinomycetes</taxon>
        <taxon>Mycobacteriales</taxon>
        <taxon>Mycobacteriaceae</taxon>
        <taxon>Mycobacterium</taxon>
        <taxon>Mycobacterium simiae complex</taxon>
    </lineage>
</organism>
<name>SODM_MYCSI</name>
<evidence type="ECO:0000250" key="1"/>
<evidence type="ECO:0000305" key="2"/>
<sequence>AEYTLPDLGWDYAASGPG</sequence>
<accession>P80582</accession>
<feature type="chain" id="PRO_0000160049" description="Superoxide dismutase [Mn]">
    <location>
        <begin position="1"/>
        <end position="18" status="greater than"/>
    </location>
</feature>
<feature type="non-terminal residue">
    <location>
        <position position="18"/>
    </location>
</feature>
<dbReference type="EC" id="1.15.1.1"/>
<dbReference type="GO" id="GO:0005737">
    <property type="term" value="C:cytoplasm"/>
    <property type="evidence" value="ECO:0007669"/>
    <property type="project" value="UniProtKB-SubCell"/>
</dbReference>
<dbReference type="GO" id="GO:0046872">
    <property type="term" value="F:metal ion binding"/>
    <property type="evidence" value="ECO:0007669"/>
    <property type="project" value="UniProtKB-KW"/>
</dbReference>
<dbReference type="GO" id="GO:0004784">
    <property type="term" value="F:superoxide dismutase activity"/>
    <property type="evidence" value="ECO:0007669"/>
    <property type="project" value="UniProtKB-EC"/>
</dbReference>
<protein>
    <recommendedName>
        <fullName>Superoxide dismutase [Mn]</fullName>
        <ecNumber>1.15.1.1</ecNumber>
    </recommendedName>
</protein>
<comment type="function">
    <text>Destroys superoxide anion radicals which are normally produced within the cells and which are toxic to biological systems.</text>
</comment>
<comment type="catalytic activity">
    <reaction>
        <text>2 superoxide + 2 H(+) = H2O2 + O2</text>
        <dbReference type="Rhea" id="RHEA:20696"/>
        <dbReference type="ChEBI" id="CHEBI:15378"/>
        <dbReference type="ChEBI" id="CHEBI:15379"/>
        <dbReference type="ChEBI" id="CHEBI:16240"/>
        <dbReference type="ChEBI" id="CHEBI:18421"/>
        <dbReference type="EC" id="1.15.1.1"/>
    </reaction>
</comment>
<comment type="cofactor">
    <cofactor evidence="1">
        <name>Mn(2+)</name>
        <dbReference type="ChEBI" id="CHEBI:29035"/>
    </cofactor>
    <text evidence="1">Binds 1 Mn(2+) ion per subunit.</text>
</comment>
<comment type="subunit">
    <text evidence="2">Homodimer.</text>
</comment>
<comment type="subcellular location">
    <subcellularLocation>
        <location>Cytoplasm</location>
    </subcellularLocation>
</comment>
<comment type="similarity">
    <text evidence="2">Belongs to the iron/manganese superoxide dismutase family.</text>
</comment>
<gene>
    <name type="primary">sodA</name>
    <name type="synonym">sod</name>
</gene>
<reference key="1">
    <citation type="journal article" date="1996" name="Microbiology">
        <title>A major T-cell-inducing cytosolic 23 kDa protein antigen of the vaccine candidate Mycobacterium habana is superoxide dismutase.</title>
        <authorList>
            <person name="Bisht D."/>
            <person name="Mehrotra J."/>
            <person name="Dhindsa M.S."/>
            <person name="Singh N.B."/>
            <person name="Sinha S."/>
        </authorList>
    </citation>
    <scope>PROTEIN SEQUENCE</scope>
    <source>
        <strain>TMC 5135</strain>
    </source>
</reference>
<proteinExistence type="evidence at protein level"/>
<keyword id="KW-0963">Cytoplasm</keyword>
<keyword id="KW-0903">Direct protein sequencing</keyword>
<keyword id="KW-0464">Manganese</keyword>
<keyword id="KW-0479">Metal-binding</keyword>
<keyword id="KW-0560">Oxidoreductase</keyword>